<comment type="function">
    <text evidence="1">The UvrABC repair system catalyzes the recognition and processing of DNA lesions. A damage recognition complex composed of 2 UvrA and 2 UvrB subunits scans DNA for abnormalities. Upon binding of the UvrA(2)B(2) complex to a putative damaged site, the DNA wraps around one UvrB monomer. DNA wrap is dependent on ATP binding by UvrB and probably causes local melting of the DNA helix, facilitating insertion of UvrB beta-hairpin between the DNA strands. Then UvrB probes one DNA strand for the presence of a lesion. If a lesion is found the UvrA subunits dissociate and the UvrB-DNA preincision complex is formed. This complex is subsequently bound by UvrC and the second UvrB is released. If no lesion is found, the DNA wraps around the other UvrB subunit that will check the other stand for damage.</text>
</comment>
<comment type="subunit">
    <text evidence="1">Forms a heterotetramer with UvrA during the search for lesions. Interacts with UvrC in an incision complex.</text>
</comment>
<comment type="subcellular location">
    <subcellularLocation>
        <location evidence="1">Cytoplasm</location>
    </subcellularLocation>
</comment>
<comment type="domain">
    <text evidence="1">The beta-hairpin motif is involved in DNA binding.</text>
</comment>
<comment type="similarity">
    <text evidence="1">Belongs to the UvrB family.</text>
</comment>
<evidence type="ECO:0000255" key="1">
    <source>
        <dbReference type="HAMAP-Rule" id="MF_00204"/>
    </source>
</evidence>
<dbReference type="EMBL" id="CP000239">
    <property type="protein sequence ID" value="ABD00683.1"/>
    <property type="molecule type" value="Genomic_DNA"/>
</dbReference>
<dbReference type="RefSeq" id="WP_011431356.1">
    <property type="nucleotide sequence ID" value="NC_007775.1"/>
</dbReference>
<dbReference type="SMR" id="Q2JRR3"/>
<dbReference type="STRING" id="321327.CYA_2564"/>
<dbReference type="KEGG" id="cya:CYA_2564"/>
<dbReference type="eggNOG" id="COG0556">
    <property type="taxonomic scope" value="Bacteria"/>
</dbReference>
<dbReference type="HOGENOM" id="CLU_009621_2_1_3"/>
<dbReference type="OrthoDB" id="9806651at2"/>
<dbReference type="Proteomes" id="UP000008818">
    <property type="component" value="Chromosome"/>
</dbReference>
<dbReference type="GO" id="GO:0005737">
    <property type="term" value="C:cytoplasm"/>
    <property type="evidence" value="ECO:0007669"/>
    <property type="project" value="UniProtKB-SubCell"/>
</dbReference>
<dbReference type="GO" id="GO:0009380">
    <property type="term" value="C:excinuclease repair complex"/>
    <property type="evidence" value="ECO:0007669"/>
    <property type="project" value="InterPro"/>
</dbReference>
<dbReference type="GO" id="GO:0005524">
    <property type="term" value="F:ATP binding"/>
    <property type="evidence" value="ECO:0007669"/>
    <property type="project" value="UniProtKB-UniRule"/>
</dbReference>
<dbReference type="GO" id="GO:0016887">
    <property type="term" value="F:ATP hydrolysis activity"/>
    <property type="evidence" value="ECO:0007669"/>
    <property type="project" value="InterPro"/>
</dbReference>
<dbReference type="GO" id="GO:0003677">
    <property type="term" value="F:DNA binding"/>
    <property type="evidence" value="ECO:0007669"/>
    <property type="project" value="UniProtKB-UniRule"/>
</dbReference>
<dbReference type="GO" id="GO:0009381">
    <property type="term" value="F:excinuclease ABC activity"/>
    <property type="evidence" value="ECO:0007669"/>
    <property type="project" value="UniProtKB-UniRule"/>
</dbReference>
<dbReference type="GO" id="GO:0004386">
    <property type="term" value="F:helicase activity"/>
    <property type="evidence" value="ECO:0007669"/>
    <property type="project" value="UniProtKB-KW"/>
</dbReference>
<dbReference type="GO" id="GO:0006289">
    <property type="term" value="P:nucleotide-excision repair"/>
    <property type="evidence" value="ECO:0007669"/>
    <property type="project" value="UniProtKB-UniRule"/>
</dbReference>
<dbReference type="GO" id="GO:0009432">
    <property type="term" value="P:SOS response"/>
    <property type="evidence" value="ECO:0007669"/>
    <property type="project" value="UniProtKB-UniRule"/>
</dbReference>
<dbReference type="CDD" id="cd17916">
    <property type="entry name" value="DEXHc_UvrB"/>
    <property type="match status" value="1"/>
</dbReference>
<dbReference type="CDD" id="cd18790">
    <property type="entry name" value="SF2_C_UvrB"/>
    <property type="match status" value="1"/>
</dbReference>
<dbReference type="Gene3D" id="3.40.50.300">
    <property type="entry name" value="P-loop containing nucleotide triphosphate hydrolases"/>
    <property type="match status" value="3"/>
</dbReference>
<dbReference type="Gene3D" id="4.10.860.10">
    <property type="entry name" value="UVR domain"/>
    <property type="match status" value="1"/>
</dbReference>
<dbReference type="HAMAP" id="MF_00204">
    <property type="entry name" value="UvrB"/>
    <property type="match status" value="1"/>
</dbReference>
<dbReference type="InterPro" id="IPR006935">
    <property type="entry name" value="Helicase/UvrB_N"/>
</dbReference>
<dbReference type="InterPro" id="IPR014001">
    <property type="entry name" value="Helicase_ATP-bd"/>
</dbReference>
<dbReference type="InterPro" id="IPR001650">
    <property type="entry name" value="Helicase_C-like"/>
</dbReference>
<dbReference type="InterPro" id="IPR027417">
    <property type="entry name" value="P-loop_NTPase"/>
</dbReference>
<dbReference type="InterPro" id="IPR001943">
    <property type="entry name" value="UVR_dom"/>
</dbReference>
<dbReference type="InterPro" id="IPR036876">
    <property type="entry name" value="UVR_dom_sf"/>
</dbReference>
<dbReference type="InterPro" id="IPR004807">
    <property type="entry name" value="UvrB"/>
</dbReference>
<dbReference type="InterPro" id="IPR041471">
    <property type="entry name" value="UvrB_inter"/>
</dbReference>
<dbReference type="InterPro" id="IPR024759">
    <property type="entry name" value="UvrB_YAD/RRR_dom"/>
</dbReference>
<dbReference type="NCBIfam" id="NF003673">
    <property type="entry name" value="PRK05298.1"/>
    <property type="match status" value="1"/>
</dbReference>
<dbReference type="NCBIfam" id="TIGR00631">
    <property type="entry name" value="uvrb"/>
    <property type="match status" value="1"/>
</dbReference>
<dbReference type="PANTHER" id="PTHR24029">
    <property type="entry name" value="UVRABC SYSTEM PROTEIN B"/>
    <property type="match status" value="1"/>
</dbReference>
<dbReference type="PANTHER" id="PTHR24029:SF0">
    <property type="entry name" value="UVRABC SYSTEM PROTEIN B"/>
    <property type="match status" value="1"/>
</dbReference>
<dbReference type="Pfam" id="PF00271">
    <property type="entry name" value="Helicase_C"/>
    <property type="match status" value="1"/>
</dbReference>
<dbReference type="Pfam" id="PF04851">
    <property type="entry name" value="ResIII"/>
    <property type="match status" value="1"/>
</dbReference>
<dbReference type="Pfam" id="PF02151">
    <property type="entry name" value="UVR"/>
    <property type="match status" value="1"/>
</dbReference>
<dbReference type="Pfam" id="PF12344">
    <property type="entry name" value="UvrB"/>
    <property type="match status" value="1"/>
</dbReference>
<dbReference type="Pfam" id="PF17757">
    <property type="entry name" value="UvrB_inter"/>
    <property type="match status" value="1"/>
</dbReference>
<dbReference type="SMART" id="SM00487">
    <property type="entry name" value="DEXDc"/>
    <property type="match status" value="1"/>
</dbReference>
<dbReference type="SMART" id="SM00490">
    <property type="entry name" value="HELICc"/>
    <property type="match status" value="1"/>
</dbReference>
<dbReference type="SUPFAM" id="SSF46600">
    <property type="entry name" value="C-terminal UvrC-binding domain of UvrB"/>
    <property type="match status" value="1"/>
</dbReference>
<dbReference type="SUPFAM" id="SSF52540">
    <property type="entry name" value="P-loop containing nucleoside triphosphate hydrolases"/>
    <property type="match status" value="2"/>
</dbReference>
<dbReference type="PROSITE" id="PS51192">
    <property type="entry name" value="HELICASE_ATP_BIND_1"/>
    <property type="match status" value="1"/>
</dbReference>
<dbReference type="PROSITE" id="PS51194">
    <property type="entry name" value="HELICASE_CTER"/>
    <property type="match status" value="1"/>
</dbReference>
<dbReference type="PROSITE" id="PS50151">
    <property type="entry name" value="UVR"/>
    <property type="match status" value="1"/>
</dbReference>
<organism>
    <name type="scientific">Synechococcus sp. (strain JA-3-3Ab)</name>
    <name type="common">Cyanobacteria bacterium Yellowstone A-Prime</name>
    <dbReference type="NCBI Taxonomy" id="321327"/>
    <lineage>
        <taxon>Bacteria</taxon>
        <taxon>Bacillati</taxon>
        <taxon>Cyanobacteriota</taxon>
        <taxon>Cyanophyceae</taxon>
        <taxon>Synechococcales</taxon>
        <taxon>Synechococcaceae</taxon>
        <taxon>Synechococcus</taxon>
    </lineage>
</organism>
<reference key="1">
    <citation type="journal article" date="2007" name="ISME J.">
        <title>Population level functional diversity in a microbial community revealed by comparative genomic and metagenomic analyses.</title>
        <authorList>
            <person name="Bhaya D."/>
            <person name="Grossman A.R."/>
            <person name="Steunou A.-S."/>
            <person name="Khuri N."/>
            <person name="Cohan F.M."/>
            <person name="Hamamura N."/>
            <person name="Melendrez M.C."/>
            <person name="Bateson M.M."/>
            <person name="Ward D.M."/>
            <person name="Heidelberg J.F."/>
        </authorList>
    </citation>
    <scope>NUCLEOTIDE SEQUENCE [LARGE SCALE GENOMIC DNA]</scope>
    <source>
        <strain>JA-3-3Ab</strain>
    </source>
</reference>
<accession>Q2JRR3</accession>
<keyword id="KW-0067">ATP-binding</keyword>
<keyword id="KW-0963">Cytoplasm</keyword>
<keyword id="KW-0227">DNA damage</keyword>
<keyword id="KW-0228">DNA excision</keyword>
<keyword id="KW-0234">DNA repair</keyword>
<keyword id="KW-0267">Excision nuclease</keyword>
<keyword id="KW-0347">Helicase</keyword>
<keyword id="KW-0378">Hydrolase</keyword>
<keyword id="KW-0547">Nucleotide-binding</keyword>
<keyword id="KW-0742">SOS response</keyword>
<sequence length="695" mass="79027">MSEFQLVSSYQPTGDQPKAIAGLVKSILEGHRFQTLLGATGTGKTFTIAHTIQQVGRPTLVMAPNKTLAAQLCNELRELFPYNAVEYFISYYDYYQPEAYVPSTDTYIAKSSSINDEIDMLRHSATRSLFERRDVIVVASVSCIYGLGMPEEYLKASIPFQVGQEINQREVLRDLAGIQYERNDLELARGRFRVKGDVLEIVPAYEDRVIRIEFFGDEIEAIRLIDPVTGEILTSLSALRVYPARHFVTPEAQLQQAILNIEQELEEQLAFFRKQGKLLEAQRLEQRTRYDLEMLREVGYCNGIENYSRHLTGRKEGEPPACLVDYFKANDWLLVVDESHVTVPQIRGMYNGDRARKQVLVDHGFRLPSALDNRPLKAEEFWAKVHQCVFVSATPGNWELEQSGAQFETVVENGKTLKFYVPGTGRVIEQVIRPTGVVDPEVHVRPTAGQVEDLLGEIYLRLERSQQGLPERVIVTTLTKRMAEDLTEYLQERGIRVRYLHSEISSIERIEILQDFREGAFDVLVGVNLLREGLDLPEVSLVAILDADKEGFLRAERSLIQMIGRAARNVRGTVVMYADTLTGSMARAIAETQRRREIQLQYNRQHNITPKPIIKKNSNAILSFLAISRKLNSQDLEKAFPVADEIPLSEIPELIGQLELKMKAAAKNLEFEEAAQLRDQIKKLRQRLLGHHQST</sequence>
<name>UVRB_SYNJA</name>
<feature type="chain" id="PRO_1000077934" description="UvrABC system protein B">
    <location>
        <begin position="1"/>
        <end position="695"/>
    </location>
</feature>
<feature type="domain" description="Helicase ATP-binding" evidence="1">
    <location>
        <begin position="25"/>
        <end position="176"/>
    </location>
</feature>
<feature type="domain" description="Helicase C-terminal" evidence="1">
    <location>
        <begin position="454"/>
        <end position="617"/>
    </location>
</feature>
<feature type="domain" description="UVR" evidence="1">
    <location>
        <begin position="652"/>
        <end position="687"/>
    </location>
</feature>
<feature type="short sequence motif" description="Beta-hairpin">
    <location>
        <begin position="91"/>
        <end position="114"/>
    </location>
</feature>
<feature type="binding site" evidence="1">
    <location>
        <begin position="38"/>
        <end position="45"/>
    </location>
    <ligand>
        <name>ATP</name>
        <dbReference type="ChEBI" id="CHEBI:30616"/>
    </ligand>
</feature>
<protein>
    <recommendedName>
        <fullName evidence="1">UvrABC system protein B</fullName>
        <shortName evidence="1">Protein UvrB</shortName>
    </recommendedName>
    <alternativeName>
        <fullName evidence="1">Excinuclease ABC subunit B</fullName>
    </alternativeName>
</protein>
<gene>
    <name evidence="1" type="primary">uvrB</name>
    <name type="ordered locus">CYA_2564</name>
</gene>
<proteinExistence type="inferred from homology"/>